<reference key="1">
    <citation type="submission" date="2007-04" db="EMBL/GenBank/DDBJ databases">
        <title>Complete sequence of chromosome of Mycobacterium gilvum PYR-GCK.</title>
        <authorList>
            <consortium name="US DOE Joint Genome Institute"/>
            <person name="Copeland A."/>
            <person name="Lucas S."/>
            <person name="Lapidus A."/>
            <person name="Barry K."/>
            <person name="Detter J.C."/>
            <person name="Glavina del Rio T."/>
            <person name="Hammon N."/>
            <person name="Israni S."/>
            <person name="Dalin E."/>
            <person name="Tice H."/>
            <person name="Pitluck S."/>
            <person name="Chain P."/>
            <person name="Malfatti S."/>
            <person name="Shin M."/>
            <person name="Vergez L."/>
            <person name="Schmutz J."/>
            <person name="Larimer F."/>
            <person name="Land M."/>
            <person name="Hauser L."/>
            <person name="Kyrpides N."/>
            <person name="Mikhailova N."/>
            <person name="Miller C."/>
            <person name="Richardson P."/>
        </authorList>
    </citation>
    <scope>NUCLEOTIDE SEQUENCE [LARGE SCALE GENOMIC DNA]</scope>
    <source>
        <strain>PYR-GCK</strain>
    </source>
</reference>
<gene>
    <name evidence="1" type="primary">ispH</name>
    <name type="ordered locus">Mflv_2079</name>
</gene>
<feature type="chain" id="PRO_1000077520" description="4-hydroxy-3-methylbut-2-enyl diphosphate reductase">
    <location>
        <begin position="1"/>
        <end position="333"/>
    </location>
</feature>
<feature type="active site" description="Proton donor" evidence="1">
    <location>
        <position position="148"/>
    </location>
</feature>
<feature type="binding site" evidence="1">
    <location>
        <position position="34"/>
    </location>
    <ligand>
        <name>[4Fe-4S] cluster</name>
        <dbReference type="ChEBI" id="CHEBI:49883"/>
    </ligand>
</feature>
<feature type="binding site" evidence="1">
    <location>
        <position position="63"/>
    </location>
    <ligand>
        <name>(2E)-4-hydroxy-3-methylbut-2-enyl diphosphate</name>
        <dbReference type="ChEBI" id="CHEBI:128753"/>
    </ligand>
</feature>
<feature type="binding site" evidence="1">
    <location>
        <position position="63"/>
    </location>
    <ligand>
        <name>dimethylallyl diphosphate</name>
        <dbReference type="ChEBI" id="CHEBI:57623"/>
    </ligand>
</feature>
<feature type="binding site" evidence="1">
    <location>
        <position position="63"/>
    </location>
    <ligand>
        <name>isopentenyl diphosphate</name>
        <dbReference type="ChEBI" id="CHEBI:128769"/>
    </ligand>
</feature>
<feature type="binding site" evidence="1">
    <location>
        <position position="96"/>
    </location>
    <ligand>
        <name>(2E)-4-hydroxy-3-methylbut-2-enyl diphosphate</name>
        <dbReference type="ChEBI" id="CHEBI:128753"/>
    </ligand>
</feature>
<feature type="binding site" evidence="1">
    <location>
        <position position="96"/>
    </location>
    <ligand>
        <name>dimethylallyl diphosphate</name>
        <dbReference type="ChEBI" id="CHEBI:57623"/>
    </ligand>
</feature>
<feature type="binding site" evidence="1">
    <location>
        <position position="96"/>
    </location>
    <ligand>
        <name>isopentenyl diphosphate</name>
        <dbReference type="ChEBI" id="CHEBI:128769"/>
    </ligand>
</feature>
<feature type="binding site" evidence="1">
    <location>
        <position position="118"/>
    </location>
    <ligand>
        <name>[4Fe-4S] cluster</name>
        <dbReference type="ChEBI" id="CHEBI:49883"/>
    </ligand>
</feature>
<feature type="binding site" evidence="1">
    <location>
        <position position="146"/>
    </location>
    <ligand>
        <name>(2E)-4-hydroxy-3-methylbut-2-enyl diphosphate</name>
        <dbReference type="ChEBI" id="CHEBI:128753"/>
    </ligand>
</feature>
<feature type="binding site" evidence="1">
    <location>
        <position position="146"/>
    </location>
    <ligand>
        <name>dimethylallyl diphosphate</name>
        <dbReference type="ChEBI" id="CHEBI:57623"/>
    </ligand>
</feature>
<feature type="binding site" evidence="1">
    <location>
        <position position="146"/>
    </location>
    <ligand>
        <name>isopentenyl diphosphate</name>
        <dbReference type="ChEBI" id="CHEBI:128769"/>
    </ligand>
</feature>
<feature type="binding site" evidence="1">
    <location>
        <position position="186"/>
    </location>
    <ligand>
        <name>(2E)-4-hydroxy-3-methylbut-2-enyl diphosphate</name>
        <dbReference type="ChEBI" id="CHEBI:128753"/>
    </ligand>
</feature>
<feature type="binding site" evidence="1">
    <location>
        <position position="216"/>
    </location>
    <ligand>
        <name>[4Fe-4S] cluster</name>
        <dbReference type="ChEBI" id="CHEBI:49883"/>
    </ligand>
</feature>
<feature type="binding site" evidence="1">
    <location>
        <position position="244"/>
    </location>
    <ligand>
        <name>(2E)-4-hydroxy-3-methylbut-2-enyl diphosphate</name>
        <dbReference type="ChEBI" id="CHEBI:128753"/>
    </ligand>
</feature>
<feature type="binding site" evidence="1">
    <location>
        <position position="244"/>
    </location>
    <ligand>
        <name>dimethylallyl diphosphate</name>
        <dbReference type="ChEBI" id="CHEBI:57623"/>
    </ligand>
</feature>
<feature type="binding site" evidence="1">
    <location>
        <position position="244"/>
    </location>
    <ligand>
        <name>isopentenyl diphosphate</name>
        <dbReference type="ChEBI" id="CHEBI:128769"/>
    </ligand>
</feature>
<feature type="binding site" evidence="1">
    <location>
        <position position="245"/>
    </location>
    <ligand>
        <name>(2E)-4-hydroxy-3-methylbut-2-enyl diphosphate</name>
        <dbReference type="ChEBI" id="CHEBI:128753"/>
    </ligand>
</feature>
<feature type="binding site" evidence="1">
    <location>
        <position position="245"/>
    </location>
    <ligand>
        <name>dimethylallyl diphosphate</name>
        <dbReference type="ChEBI" id="CHEBI:57623"/>
    </ligand>
</feature>
<feature type="binding site" evidence="1">
    <location>
        <position position="245"/>
    </location>
    <ligand>
        <name>isopentenyl diphosphate</name>
        <dbReference type="ChEBI" id="CHEBI:128769"/>
    </ligand>
</feature>
<feature type="binding site" evidence="1">
    <location>
        <position position="246"/>
    </location>
    <ligand>
        <name>(2E)-4-hydroxy-3-methylbut-2-enyl diphosphate</name>
        <dbReference type="ChEBI" id="CHEBI:128753"/>
    </ligand>
</feature>
<feature type="binding site" evidence="1">
    <location>
        <position position="246"/>
    </location>
    <ligand>
        <name>dimethylallyl diphosphate</name>
        <dbReference type="ChEBI" id="CHEBI:57623"/>
    </ligand>
</feature>
<feature type="binding site" evidence="1">
    <location>
        <position position="246"/>
    </location>
    <ligand>
        <name>isopentenyl diphosphate</name>
        <dbReference type="ChEBI" id="CHEBI:128769"/>
    </ligand>
</feature>
<feature type="binding site" evidence="1">
    <location>
        <position position="289"/>
    </location>
    <ligand>
        <name>(2E)-4-hydroxy-3-methylbut-2-enyl diphosphate</name>
        <dbReference type="ChEBI" id="CHEBI:128753"/>
    </ligand>
</feature>
<feature type="binding site" evidence="1">
    <location>
        <position position="289"/>
    </location>
    <ligand>
        <name>dimethylallyl diphosphate</name>
        <dbReference type="ChEBI" id="CHEBI:57623"/>
    </ligand>
</feature>
<feature type="binding site" evidence="1">
    <location>
        <position position="289"/>
    </location>
    <ligand>
        <name>isopentenyl diphosphate</name>
        <dbReference type="ChEBI" id="CHEBI:128769"/>
    </ligand>
</feature>
<keyword id="KW-0004">4Fe-4S</keyword>
<keyword id="KW-0408">Iron</keyword>
<keyword id="KW-0411">Iron-sulfur</keyword>
<keyword id="KW-0414">Isoprene biosynthesis</keyword>
<keyword id="KW-0479">Metal-binding</keyword>
<keyword id="KW-0560">Oxidoreductase</keyword>
<accession>A4T986</accession>
<dbReference type="EC" id="1.17.7.4" evidence="1"/>
<dbReference type="EMBL" id="CP000656">
    <property type="protein sequence ID" value="ABP44557.1"/>
    <property type="molecule type" value="Genomic_DNA"/>
</dbReference>
<dbReference type="SMR" id="A4T986"/>
<dbReference type="STRING" id="350054.Mflv_2079"/>
<dbReference type="KEGG" id="mgi:Mflv_2079"/>
<dbReference type="eggNOG" id="COG0761">
    <property type="taxonomic scope" value="Bacteria"/>
</dbReference>
<dbReference type="HOGENOM" id="CLU_027486_1_0_11"/>
<dbReference type="OrthoDB" id="9804068at2"/>
<dbReference type="UniPathway" id="UPA00056">
    <property type="reaction ID" value="UER00097"/>
</dbReference>
<dbReference type="UniPathway" id="UPA00059">
    <property type="reaction ID" value="UER00105"/>
</dbReference>
<dbReference type="GO" id="GO:0051539">
    <property type="term" value="F:4 iron, 4 sulfur cluster binding"/>
    <property type="evidence" value="ECO:0007669"/>
    <property type="project" value="UniProtKB-UniRule"/>
</dbReference>
<dbReference type="GO" id="GO:0051745">
    <property type="term" value="F:4-hydroxy-3-methylbut-2-enyl diphosphate reductase activity"/>
    <property type="evidence" value="ECO:0007669"/>
    <property type="project" value="UniProtKB-UniRule"/>
</dbReference>
<dbReference type="GO" id="GO:0046872">
    <property type="term" value="F:metal ion binding"/>
    <property type="evidence" value="ECO:0007669"/>
    <property type="project" value="UniProtKB-KW"/>
</dbReference>
<dbReference type="GO" id="GO:0050992">
    <property type="term" value="P:dimethylallyl diphosphate biosynthetic process"/>
    <property type="evidence" value="ECO:0007669"/>
    <property type="project" value="UniProtKB-UniRule"/>
</dbReference>
<dbReference type="GO" id="GO:0019288">
    <property type="term" value="P:isopentenyl diphosphate biosynthetic process, methylerythritol 4-phosphate pathway"/>
    <property type="evidence" value="ECO:0007669"/>
    <property type="project" value="UniProtKB-UniRule"/>
</dbReference>
<dbReference type="GO" id="GO:0016114">
    <property type="term" value="P:terpenoid biosynthetic process"/>
    <property type="evidence" value="ECO:0007669"/>
    <property type="project" value="UniProtKB-UniRule"/>
</dbReference>
<dbReference type="CDD" id="cd13944">
    <property type="entry name" value="lytB_ispH"/>
    <property type="match status" value="1"/>
</dbReference>
<dbReference type="Gene3D" id="3.40.50.11270">
    <property type="match status" value="1"/>
</dbReference>
<dbReference type="Gene3D" id="3.40.1010.20">
    <property type="entry name" value="4-hydroxy-3-methylbut-2-enyl diphosphate reductase, catalytic domain"/>
    <property type="match status" value="2"/>
</dbReference>
<dbReference type="HAMAP" id="MF_00191">
    <property type="entry name" value="IspH"/>
    <property type="match status" value="1"/>
</dbReference>
<dbReference type="InterPro" id="IPR003451">
    <property type="entry name" value="LytB/IspH"/>
</dbReference>
<dbReference type="NCBIfam" id="TIGR00216">
    <property type="entry name" value="ispH_lytB"/>
    <property type="match status" value="1"/>
</dbReference>
<dbReference type="NCBIfam" id="NF002188">
    <property type="entry name" value="PRK01045.1-2"/>
    <property type="match status" value="1"/>
</dbReference>
<dbReference type="NCBIfam" id="NF002189">
    <property type="entry name" value="PRK01045.1-3"/>
    <property type="match status" value="1"/>
</dbReference>
<dbReference type="NCBIfam" id="NF002190">
    <property type="entry name" value="PRK01045.1-4"/>
    <property type="match status" value="1"/>
</dbReference>
<dbReference type="PANTHER" id="PTHR30426">
    <property type="entry name" value="4-HYDROXY-3-METHYLBUT-2-ENYL DIPHOSPHATE REDUCTASE"/>
    <property type="match status" value="1"/>
</dbReference>
<dbReference type="PANTHER" id="PTHR30426:SF0">
    <property type="entry name" value="4-HYDROXY-3-METHYLBUT-2-ENYL DIPHOSPHATE REDUCTASE"/>
    <property type="match status" value="1"/>
</dbReference>
<dbReference type="Pfam" id="PF02401">
    <property type="entry name" value="LYTB"/>
    <property type="match status" value="1"/>
</dbReference>
<protein>
    <recommendedName>
        <fullName evidence="1">4-hydroxy-3-methylbut-2-enyl diphosphate reductase</fullName>
        <shortName evidence="1">HMBPP reductase</shortName>
        <ecNumber evidence="1">1.17.7.4</ecNumber>
    </recommendedName>
</protein>
<comment type="function">
    <text evidence="1">Catalyzes the conversion of 1-hydroxy-2-methyl-2-(E)-butenyl 4-diphosphate (HMBPP) into a mixture of isopentenyl diphosphate (IPP) and dimethylallyl diphosphate (DMAPP). Acts in the terminal step of the DOXP/MEP pathway for isoprenoid precursor biosynthesis.</text>
</comment>
<comment type="catalytic activity">
    <reaction evidence="1">
        <text>isopentenyl diphosphate + 2 oxidized [2Fe-2S]-[ferredoxin] + H2O = (2E)-4-hydroxy-3-methylbut-2-enyl diphosphate + 2 reduced [2Fe-2S]-[ferredoxin] + 2 H(+)</text>
        <dbReference type="Rhea" id="RHEA:24488"/>
        <dbReference type="Rhea" id="RHEA-COMP:10000"/>
        <dbReference type="Rhea" id="RHEA-COMP:10001"/>
        <dbReference type="ChEBI" id="CHEBI:15377"/>
        <dbReference type="ChEBI" id="CHEBI:15378"/>
        <dbReference type="ChEBI" id="CHEBI:33737"/>
        <dbReference type="ChEBI" id="CHEBI:33738"/>
        <dbReference type="ChEBI" id="CHEBI:128753"/>
        <dbReference type="ChEBI" id="CHEBI:128769"/>
        <dbReference type="EC" id="1.17.7.4"/>
    </reaction>
</comment>
<comment type="catalytic activity">
    <reaction evidence="1">
        <text>dimethylallyl diphosphate + 2 oxidized [2Fe-2S]-[ferredoxin] + H2O = (2E)-4-hydroxy-3-methylbut-2-enyl diphosphate + 2 reduced [2Fe-2S]-[ferredoxin] + 2 H(+)</text>
        <dbReference type="Rhea" id="RHEA:24825"/>
        <dbReference type="Rhea" id="RHEA-COMP:10000"/>
        <dbReference type="Rhea" id="RHEA-COMP:10001"/>
        <dbReference type="ChEBI" id="CHEBI:15377"/>
        <dbReference type="ChEBI" id="CHEBI:15378"/>
        <dbReference type="ChEBI" id="CHEBI:33737"/>
        <dbReference type="ChEBI" id="CHEBI:33738"/>
        <dbReference type="ChEBI" id="CHEBI:57623"/>
        <dbReference type="ChEBI" id="CHEBI:128753"/>
        <dbReference type="EC" id="1.17.7.4"/>
    </reaction>
</comment>
<comment type="cofactor">
    <cofactor evidence="1">
        <name>[4Fe-4S] cluster</name>
        <dbReference type="ChEBI" id="CHEBI:49883"/>
    </cofactor>
    <text evidence="1">Binds 1 [4Fe-4S] cluster per subunit.</text>
</comment>
<comment type="pathway">
    <text evidence="1">Isoprenoid biosynthesis; dimethylallyl diphosphate biosynthesis; dimethylallyl diphosphate from (2E)-4-hydroxy-3-methylbutenyl diphosphate: step 1/1.</text>
</comment>
<comment type="pathway">
    <text evidence="1">Isoprenoid biosynthesis; isopentenyl diphosphate biosynthesis via DXP pathway; isopentenyl diphosphate from 1-deoxy-D-xylulose 5-phosphate: step 6/6.</text>
</comment>
<comment type="similarity">
    <text evidence="1">Belongs to the IspH family.</text>
</comment>
<organism>
    <name type="scientific">Mycolicibacterium gilvum (strain PYR-GCK)</name>
    <name type="common">Mycobacterium gilvum (strain PYR-GCK)</name>
    <dbReference type="NCBI Taxonomy" id="350054"/>
    <lineage>
        <taxon>Bacteria</taxon>
        <taxon>Bacillati</taxon>
        <taxon>Actinomycetota</taxon>
        <taxon>Actinomycetes</taxon>
        <taxon>Mycobacteriales</taxon>
        <taxon>Mycobacteriaceae</taxon>
        <taxon>Mycolicibacterium</taxon>
    </lineage>
</organism>
<name>ISPH_MYCGI</name>
<sequence length="333" mass="35844">MPPTVNMGIPGAASSVVERTAGKRVLLAEPRGYCAGVDRAVETVERALEKHGAPIYVRHEIVHNRYVVDTLAKAGAIFVEQTDEVPEGAIVVFSAHGVAPTVHVEAAARNLKTIDATCPLVTKVHNEAKRFARDDYDILLVGHEGHEEVVGTAGEAPDHVQVVDNPDAVDNVVVRDPNKVIWLSQTTLSVDETMETVRRLREKFPTLQDPPSDDICYATQNRQVAVKAMAPECELVIVVGSKNSSNSVRLVEVALGAGSRAAHLVDYAEDIDPAWLDGVTTVGVTSGASVPEILVRGVLDRLAEHGFDTVQPVTTANETLVFALPREIRPARA</sequence>
<proteinExistence type="inferred from homology"/>
<evidence type="ECO:0000255" key="1">
    <source>
        <dbReference type="HAMAP-Rule" id="MF_00191"/>
    </source>
</evidence>